<keyword id="KW-0479">Metal-binding</keyword>
<keyword id="KW-0665">Pyrimidine biosynthesis</keyword>
<keyword id="KW-1185">Reference proteome</keyword>
<keyword id="KW-0862">Zinc</keyword>
<comment type="function">
    <text evidence="1">Involved in allosteric regulation of aspartate carbamoyltransferase.</text>
</comment>
<comment type="cofactor">
    <cofactor evidence="1">
        <name>Zn(2+)</name>
        <dbReference type="ChEBI" id="CHEBI:29105"/>
    </cofactor>
    <text evidence="1">Binds 1 zinc ion per subunit.</text>
</comment>
<comment type="subunit">
    <text evidence="1">Contains catalytic and regulatory chains.</text>
</comment>
<comment type="similarity">
    <text evidence="1">Belongs to the PyrI family.</text>
</comment>
<organism>
    <name type="scientific">Methanosphaera stadtmanae (strain ATCC 43021 / DSM 3091 / JCM 11832 / MCB-3)</name>
    <dbReference type="NCBI Taxonomy" id="339860"/>
    <lineage>
        <taxon>Archaea</taxon>
        <taxon>Methanobacteriati</taxon>
        <taxon>Methanobacteriota</taxon>
        <taxon>Methanomada group</taxon>
        <taxon>Methanobacteria</taxon>
        <taxon>Methanobacteriales</taxon>
        <taxon>Methanobacteriaceae</taxon>
        <taxon>Methanosphaera</taxon>
    </lineage>
</organism>
<feature type="chain" id="PRO_0000321506" description="Aspartate carbamoyltransferase regulatory chain">
    <location>
        <begin position="1"/>
        <end position="153"/>
    </location>
</feature>
<feature type="binding site" evidence="1">
    <location>
        <position position="108"/>
    </location>
    <ligand>
        <name>Zn(2+)</name>
        <dbReference type="ChEBI" id="CHEBI:29105"/>
    </ligand>
</feature>
<feature type="binding site" evidence="1">
    <location>
        <position position="113"/>
    </location>
    <ligand>
        <name>Zn(2+)</name>
        <dbReference type="ChEBI" id="CHEBI:29105"/>
    </ligand>
</feature>
<feature type="binding site" evidence="1">
    <location>
        <position position="137"/>
    </location>
    <ligand>
        <name>Zn(2+)</name>
        <dbReference type="ChEBI" id="CHEBI:29105"/>
    </ligand>
</feature>
<feature type="binding site" evidence="1">
    <location>
        <position position="140"/>
    </location>
    <ligand>
        <name>Zn(2+)</name>
        <dbReference type="ChEBI" id="CHEBI:29105"/>
    </ligand>
</feature>
<name>PYRI_METST</name>
<proteinExistence type="inferred from homology"/>
<accession>Q2NGY3</accession>
<gene>
    <name evidence="1" type="primary">pyrI</name>
    <name type="ordered locus">Msp_0521</name>
</gene>
<evidence type="ECO:0000255" key="1">
    <source>
        <dbReference type="HAMAP-Rule" id="MF_00002"/>
    </source>
</evidence>
<reference key="1">
    <citation type="journal article" date="2006" name="J. Bacteriol.">
        <title>The genome sequence of Methanosphaera stadtmanae reveals why this human intestinal archaeon is restricted to methanol and H2 for methane formation and ATP synthesis.</title>
        <authorList>
            <person name="Fricke W.F."/>
            <person name="Seedorf H."/>
            <person name="Henne A."/>
            <person name="Kruer M."/>
            <person name="Liesegang H."/>
            <person name="Hedderich R."/>
            <person name="Gottschalk G."/>
            <person name="Thauer R.K."/>
        </authorList>
    </citation>
    <scope>NUCLEOTIDE SEQUENCE [LARGE SCALE GENOMIC DNA]</scope>
    <source>
        <strain>ATCC 43021 / DSM 3091 / JCM 11832 / MCB-3</strain>
    </source>
</reference>
<protein>
    <recommendedName>
        <fullName evidence="1">Aspartate carbamoyltransferase regulatory chain</fullName>
    </recommendedName>
</protein>
<sequence length="153" mass="17624">MTKSELKVKRIKNGTVIDHITANRSLNILNMLKLPDDETAIMVAINVESSDMGRKDIIKIEGRELSQDEVDKLVLLAPQATLNIIRDYQNIRKSHLHLMDEITDVVTCSNPNCITNSNEPIQKRFAVQNKQPITLRCYYCERTMEYDDIESQF</sequence>
<dbReference type="EMBL" id="CP000102">
    <property type="protein sequence ID" value="ABC56920.1"/>
    <property type="molecule type" value="Genomic_DNA"/>
</dbReference>
<dbReference type="RefSeq" id="WP_011406120.1">
    <property type="nucleotide sequence ID" value="NC_007681.1"/>
</dbReference>
<dbReference type="SMR" id="Q2NGY3"/>
<dbReference type="STRING" id="339860.Msp_0521"/>
<dbReference type="GeneID" id="41325095"/>
<dbReference type="KEGG" id="mst:Msp_0521"/>
<dbReference type="eggNOG" id="arCOG04229">
    <property type="taxonomic scope" value="Archaea"/>
</dbReference>
<dbReference type="HOGENOM" id="CLU_128576_0_0_2"/>
<dbReference type="OrthoDB" id="7000at2157"/>
<dbReference type="Proteomes" id="UP000001931">
    <property type="component" value="Chromosome"/>
</dbReference>
<dbReference type="GO" id="GO:0009347">
    <property type="term" value="C:aspartate carbamoyltransferase complex"/>
    <property type="evidence" value="ECO:0007669"/>
    <property type="project" value="InterPro"/>
</dbReference>
<dbReference type="GO" id="GO:0046872">
    <property type="term" value="F:metal ion binding"/>
    <property type="evidence" value="ECO:0007669"/>
    <property type="project" value="UniProtKB-KW"/>
</dbReference>
<dbReference type="GO" id="GO:0006207">
    <property type="term" value="P:'de novo' pyrimidine nucleobase biosynthetic process"/>
    <property type="evidence" value="ECO:0007669"/>
    <property type="project" value="InterPro"/>
</dbReference>
<dbReference type="GO" id="GO:0006221">
    <property type="term" value="P:pyrimidine nucleotide biosynthetic process"/>
    <property type="evidence" value="ECO:0007669"/>
    <property type="project" value="UniProtKB-UniRule"/>
</dbReference>
<dbReference type="Gene3D" id="2.30.30.20">
    <property type="entry name" value="Aspartate carbamoyltransferase regulatory subunit, C-terminal domain"/>
    <property type="match status" value="1"/>
</dbReference>
<dbReference type="Gene3D" id="3.30.70.140">
    <property type="entry name" value="Aspartate carbamoyltransferase regulatory subunit, N-terminal domain"/>
    <property type="match status" value="1"/>
</dbReference>
<dbReference type="HAMAP" id="MF_00002">
    <property type="entry name" value="Asp_carb_tr_reg"/>
    <property type="match status" value="1"/>
</dbReference>
<dbReference type="InterPro" id="IPR020545">
    <property type="entry name" value="Asp_carbamoyltransf_reg_N"/>
</dbReference>
<dbReference type="InterPro" id="IPR002801">
    <property type="entry name" value="Asp_carbamoylTrfase_reg"/>
</dbReference>
<dbReference type="InterPro" id="IPR020542">
    <property type="entry name" value="Asp_carbamoyltrfase_reg_C"/>
</dbReference>
<dbReference type="InterPro" id="IPR036792">
    <property type="entry name" value="Asp_carbatrfase_reg_C_sf"/>
</dbReference>
<dbReference type="InterPro" id="IPR036793">
    <property type="entry name" value="Asp_carbatrfase_reg_N_sf"/>
</dbReference>
<dbReference type="NCBIfam" id="TIGR00240">
    <property type="entry name" value="ATCase_reg"/>
    <property type="match status" value="1"/>
</dbReference>
<dbReference type="PANTHER" id="PTHR35805">
    <property type="entry name" value="ASPARTATE CARBAMOYLTRANSFERASE REGULATORY CHAIN"/>
    <property type="match status" value="1"/>
</dbReference>
<dbReference type="PANTHER" id="PTHR35805:SF1">
    <property type="entry name" value="ASPARTATE CARBAMOYLTRANSFERASE REGULATORY CHAIN"/>
    <property type="match status" value="1"/>
</dbReference>
<dbReference type="Pfam" id="PF01948">
    <property type="entry name" value="PyrI"/>
    <property type="match status" value="1"/>
</dbReference>
<dbReference type="Pfam" id="PF02748">
    <property type="entry name" value="PyrI_C"/>
    <property type="match status" value="1"/>
</dbReference>
<dbReference type="SUPFAM" id="SSF57825">
    <property type="entry name" value="Aspartate carbamoyltransferase, Regulatory-chain, C-terminal domain"/>
    <property type="match status" value="1"/>
</dbReference>
<dbReference type="SUPFAM" id="SSF54893">
    <property type="entry name" value="Aspartate carbamoyltransferase, Regulatory-chain, N-terminal domain"/>
    <property type="match status" value="1"/>
</dbReference>